<proteinExistence type="inferred from homology"/>
<evidence type="ECO:0000255" key="1">
    <source>
        <dbReference type="HAMAP-Rule" id="MF_01337"/>
    </source>
</evidence>
<evidence type="ECO:0000305" key="2"/>
<comment type="function">
    <text evidence="1">This is one of the proteins that bind and probably mediate the attachment of the 5S RNA into the large ribosomal subunit, where it forms part of the central protuberance.</text>
</comment>
<comment type="subunit">
    <text evidence="1">Part of the 50S ribosomal subunit; part of the 5S rRNA/L5/L18/L25 subcomplex. Contacts the 5S and 23S rRNAs.</text>
</comment>
<comment type="similarity">
    <text evidence="1">Belongs to the universal ribosomal protein uL18 family.</text>
</comment>
<keyword id="KW-1185">Reference proteome</keyword>
<keyword id="KW-0687">Ribonucleoprotein</keyword>
<keyword id="KW-0689">Ribosomal protein</keyword>
<keyword id="KW-0694">RNA-binding</keyword>
<keyword id="KW-0699">rRNA-binding</keyword>
<dbReference type="EMBL" id="CP001614">
    <property type="protein sequence ID" value="ACR13082.1"/>
    <property type="molecule type" value="Genomic_DNA"/>
</dbReference>
<dbReference type="RefSeq" id="WP_015819195.1">
    <property type="nucleotide sequence ID" value="NC_012997.1"/>
</dbReference>
<dbReference type="SMR" id="C5BQ77"/>
<dbReference type="STRING" id="377629.TERTU_0924"/>
<dbReference type="KEGG" id="ttu:TERTU_0924"/>
<dbReference type="eggNOG" id="COG0256">
    <property type="taxonomic scope" value="Bacteria"/>
</dbReference>
<dbReference type="HOGENOM" id="CLU_098841_0_1_6"/>
<dbReference type="OrthoDB" id="9810939at2"/>
<dbReference type="Proteomes" id="UP000009080">
    <property type="component" value="Chromosome"/>
</dbReference>
<dbReference type="GO" id="GO:0022625">
    <property type="term" value="C:cytosolic large ribosomal subunit"/>
    <property type="evidence" value="ECO:0007669"/>
    <property type="project" value="TreeGrafter"/>
</dbReference>
<dbReference type="GO" id="GO:0008097">
    <property type="term" value="F:5S rRNA binding"/>
    <property type="evidence" value="ECO:0007669"/>
    <property type="project" value="TreeGrafter"/>
</dbReference>
<dbReference type="GO" id="GO:0003735">
    <property type="term" value="F:structural constituent of ribosome"/>
    <property type="evidence" value="ECO:0007669"/>
    <property type="project" value="InterPro"/>
</dbReference>
<dbReference type="GO" id="GO:0006412">
    <property type="term" value="P:translation"/>
    <property type="evidence" value="ECO:0007669"/>
    <property type="project" value="UniProtKB-UniRule"/>
</dbReference>
<dbReference type="CDD" id="cd00432">
    <property type="entry name" value="Ribosomal_L18_L5e"/>
    <property type="match status" value="1"/>
</dbReference>
<dbReference type="FunFam" id="3.30.420.100:FF:000001">
    <property type="entry name" value="50S ribosomal protein L18"/>
    <property type="match status" value="1"/>
</dbReference>
<dbReference type="Gene3D" id="3.30.420.100">
    <property type="match status" value="1"/>
</dbReference>
<dbReference type="HAMAP" id="MF_01337_B">
    <property type="entry name" value="Ribosomal_uL18_B"/>
    <property type="match status" value="1"/>
</dbReference>
<dbReference type="InterPro" id="IPR004389">
    <property type="entry name" value="Ribosomal_uL18_bac-type"/>
</dbReference>
<dbReference type="InterPro" id="IPR005484">
    <property type="entry name" value="Ribosomal_uL18_bac/euk"/>
</dbReference>
<dbReference type="NCBIfam" id="TIGR00060">
    <property type="entry name" value="L18_bact"/>
    <property type="match status" value="1"/>
</dbReference>
<dbReference type="PANTHER" id="PTHR12899">
    <property type="entry name" value="39S RIBOSOMAL PROTEIN L18, MITOCHONDRIAL"/>
    <property type="match status" value="1"/>
</dbReference>
<dbReference type="PANTHER" id="PTHR12899:SF3">
    <property type="entry name" value="LARGE RIBOSOMAL SUBUNIT PROTEIN UL18M"/>
    <property type="match status" value="1"/>
</dbReference>
<dbReference type="Pfam" id="PF00861">
    <property type="entry name" value="Ribosomal_L18p"/>
    <property type="match status" value="1"/>
</dbReference>
<dbReference type="SUPFAM" id="SSF53137">
    <property type="entry name" value="Translational machinery components"/>
    <property type="match status" value="1"/>
</dbReference>
<name>RL18_TERTT</name>
<feature type="chain" id="PRO_1000214690" description="Large ribosomal subunit protein uL18">
    <location>
        <begin position="1"/>
        <end position="116"/>
    </location>
</feature>
<organism>
    <name type="scientific">Teredinibacter turnerae (strain ATCC 39867 / T7901)</name>
    <dbReference type="NCBI Taxonomy" id="377629"/>
    <lineage>
        <taxon>Bacteria</taxon>
        <taxon>Pseudomonadati</taxon>
        <taxon>Pseudomonadota</taxon>
        <taxon>Gammaproteobacteria</taxon>
        <taxon>Cellvibrionales</taxon>
        <taxon>Cellvibrionaceae</taxon>
        <taxon>Teredinibacter</taxon>
    </lineage>
</organism>
<accession>C5BQ77</accession>
<gene>
    <name evidence="1" type="primary">rplR</name>
    <name type="ordered locus">TERTU_0924</name>
</gene>
<protein>
    <recommendedName>
        <fullName evidence="1">Large ribosomal subunit protein uL18</fullName>
    </recommendedName>
    <alternativeName>
        <fullName evidence="2">50S ribosomal protein L18</fullName>
    </alternativeName>
</protein>
<sequence length="116" mass="12711">MNAKKQSRIRRATRSRSKIRELRETRLCVNRTPRHIYAQIISPESDKVLASASTLDKDLRSGATGNIDAATAVGKLIAERAKAAGVTKVAFDRSGFKFHGRVKALADAARESGLEF</sequence>
<reference key="1">
    <citation type="journal article" date="2009" name="PLoS ONE">
        <title>The complete genome of Teredinibacter turnerae T7901: an intracellular endosymbiont of marine wood-boring bivalves (shipworms).</title>
        <authorList>
            <person name="Yang J.C."/>
            <person name="Madupu R."/>
            <person name="Durkin A.S."/>
            <person name="Ekborg N.A."/>
            <person name="Pedamallu C.S."/>
            <person name="Hostetler J.B."/>
            <person name="Radune D."/>
            <person name="Toms B.S."/>
            <person name="Henrissat B."/>
            <person name="Coutinho P.M."/>
            <person name="Schwarz S."/>
            <person name="Field L."/>
            <person name="Trindade-Silva A.E."/>
            <person name="Soares C.A.G."/>
            <person name="Elshahawi S."/>
            <person name="Hanora A."/>
            <person name="Schmidt E.W."/>
            <person name="Haygood M.G."/>
            <person name="Posfai J."/>
            <person name="Benner J."/>
            <person name="Madinger C."/>
            <person name="Nove J."/>
            <person name="Anton B."/>
            <person name="Chaudhary K."/>
            <person name="Foster J."/>
            <person name="Holman A."/>
            <person name="Kumar S."/>
            <person name="Lessard P.A."/>
            <person name="Luyten Y.A."/>
            <person name="Slatko B."/>
            <person name="Wood N."/>
            <person name="Wu B."/>
            <person name="Teplitski M."/>
            <person name="Mougous J.D."/>
            <person name="Ward N."/>
            <person name="Eisen J.A."/>
            <person name="Badger J.H."/>
            <person name="Distel D.L."/>
        </authorList>
    </citation>
    <scope>NUCLEOTIDE SEQUENCE [LARGE SCALE GENOMIC DNA]</scope>
    <source>
        <strain>ATCC 39867 / T7901</strain>
    </source>
</reference>